<sequence length="83" mass="9368">MKTSMFLTLTGLVLLFVVCYASESEEKEFPKELLSSIFAADSDFKVEERGCLGDKCDYNNGCCSGYVCSRTWKWCVLAGPWCR</sequence>
<proteinExistence type="evidence at transcript level"/>
<protein>
    <recommendedName>
        <fullName>U5-theraphotoxin-Hs1c</fullName>
        <shortName>U5-TRTX-Hs1c</shortName>
    </recommendedName>
    <alternativeName>
        <fullName>Lectin SHL-1a1</fullName>
    </alternativeName>
    <alternativeName>
        <fullName>Lectin SHL-Ia1</fullName>
    </alternativeName>
</protein>
<comment type="function">
    <text evidence="3">Agglutinates erythrocytes.</text>
</comment>
<comment type="subcellular location">
    <subcellularLocation>
        <location evidence="1">Secreted</location>
    </subcellularLocation>
</comment>
<comment type="tissue specificity">
    <text>Expressed by the venom gland.</text>
</comment>
<comment type="domain">
    <text>The presence of a 'disulfide through disulfide knot' structurally defines this protein as a knottin.</text>
</comment>
<comment type="similarity">
    <text evidence="5">Belongs to the neurotoxin 10 (Hwtx-1) family. 51 (Hntx-8) subfamily. Hntx-8 sub-subfamily.</text>
</comment>
<reference key="1">
    <citation type="journal article" date="2008" name="Toxicon">
        <title>Molecular diversification based on analysis of expressed sequence tags from the venom glands of the Chinese bird spider Ornithoctonus huwena.</title>
        <authorList>
            <person name="Jiang L."/>
            <person name="Peng L."/>
            <person name="Chen J."/>
            <person name="Zhang Y."/>
            <person name="Xiong X."/>
            <person name="Liang S."/>
        </authorList>
    </citation>
    <scope>NUCLEOTIDE SEQUENCE [MRNA]</scope>
    <source>
        <tissue>Venom gland</tissue>
    </source>
</reference>
<organism>
    <name type="scientific">Cyriopagopus schmidti</name>
    <name type="common">Chinese bird spider</name>
    <name type="synonym">Haplopelma schmidti</name>
    <dbReference type="NCBI Taxonomy" id="29017"/>
    <lineage>
        <taxon>Eukaryota</taxon>
        <taxon>Metazoa</taxon>
        <taxon>Ecdysozoa</taxon>
        <taxon>Arthropoda</taxon>
        <taxon>Chelicerata</taxon>
        <taxon>Arachnida</taxon>
        <taxon>Araneae</taxon>
        <taxon>Mygalomorphae</taxon>
        <taxon>Theraphosidae</taxon>
        <taxon>Cyriopagopus</taxon>
    </lineage>
</organism>
<keyword id="KW-1015">Disulfide bond</keyword>
<keyword id="KW-0960">Knottin</keyword>
<keyword id="KW-0430">Lectin</keyword>
<keyword id="KW-0964">Secreted</keyword>
<keyword id="KW-0732">Signal</keyword>
<keyword id="KW-0800">Toxin</keyword>
<accession>B3FIS0</accession>
<dbReference type="EMBL" id="EU195264">
    <property type="protein sequence ID" value="ABY77717.1"/>
    <property type="molecule type" value="mRNA"/>
</dbReference>
<dbReference type="BMRB" id="B3FIS0"/>
<dbReference type="SMR" id="B3FIS0"/>
<dbReference type="ArachnoServer" id="AS000756">
    <property type="toxin name" value="U5-theraphotoxin-Hs1c"/>
</dbReference>
<dbReference type="GO" id="GO:0005576">
    <property type="term" value="C:extracellular region"/>
    <property type="evidence" value="ECO:0007669"/>
    <property type="project" value="UniProtKB-SubCell"/>
</dbReference>
<dbReference type="GO" id="GO:0030246">
    <property type="term" value="F:carbohydrate binding"/>
    <property type="evidence" value="ECO:0007669"/>
    <property type="project" value="UniProtKB-KW"/>
</dbReference>
<dbReference type="GO" id="GO:0008200">
    <property type="term" value="F:ion channel inhibitor activity"/>
    <property type="evidence" value="ECO:0007669"/>
    <property type="project" value="InterPro"/>
</dbReference>
<dbReference type="GO" id="GO:0090729">
    <property type="term" value="F:toxin activity"/>
    <property type="evidence" value="ECO:0007669"/>
    <property type="project" value="UniProtKB-KW"/>
</dbReference>
<dbReference type="InterPro" id="IPR011696">
    <property type="entry name" value="Huwentoxin-1"/>
</dbReference>
<dbReference type="InterPro" id="IPR013140">
    <property type="entry name" value="Huwentoxin_CS1"/>
</dbReference>
<dbReference type="Pfam" id="PF07740">
    <property type="entry name" value="Toxin_12"/>
    <property type="match status" value="1"/>
</dbReference>
<dbReference type="SUPFAM" id="SSF57059">
    <property type="entry name" value="omega toxin-like"/>
    <property type="match status" value="1"/>
</dbReference>
<dbReference type="PROSITE" id="PS60021">
    <property type="entry name" value="HWTX_1"/>
    <property type="match status" value="1"/>
</dbReference>
<name>TXLC_CYRSC</name>
<feature type="signal peptide" evidence="4">
    <location>
        <begin position="1"/>
        <end position="21"/>
    </location>
</feature>
<feature type="propeptide" id="PRO_0000380162" evidence="1">
    <location>
        <begin position="22"/>
        <end position="49"/>
    </location>
</feature>
<feature type="chain" id="PRO_0000380163" description="U5-theraphotoxin-Hs1c">
    <location>
        <begin position="50"/>
        <end position="83"/>
    </location>
</feature>
<feature type="disulfide bond" evidence="2">
    <location>
        <begin position="51"/>
        <end position="63"/>
    </location>
</feature>
<feature type="disulfide bond" evidence="2">
    <location>
        <begin position="56"/>
        <end position="68"/>
    </location>
</feature>
<feature type="disulfide bond" evidence="2">
    <location>
        <begin position="62"/>
        <end position="75"/>
    </location>
</feature>
<evidence type="ECO:0000250" key="1"/>
<evidence type="ECO:0000250" key="2">
    <source>
        <dbReference type="UniProtKB" id="B3FIS6"/>
    </source>
</evidence>
<evidence type="ECO:0000250" key="3">
    <source>
        <dbReference type="UniProtKB" id="Q86C51"/>
    </source>
</evidence>
<evidence type="ECO:0000255" key="4"/>
<evidence type="ECO:0000305" key="5"/>